<dbReference type="EC" id="6.3.4.13" evidence="2"/>
<dbReference type="EMBL" id="AE005673">
    <property type="protein sequence ID" value="AAK22284.1"/>
    <property type="molecule type" value="Genomic_DNA"/>
</dbReference>
<dbReference type="PIR" id="H87285">
    <property type="entry name" value="H87285"/>
</dbReference>
<dbReference type="RefSeq" id="NP_419116.1">
    <property type="nucleotide sequence ID" value="NC_002696.2"/>
</dbReference>
<dbReference type="RefSeq" id="WP_010918186.1">
    <property type="nucleotide sequence ID" value="NC_002696.2"/>
</dbReference>
<dbReference type="SMR" id="Q9ABD2"/>
<dbReference type="STRING" id="190650.CC_0297"/>
<dbReference type="EnsemblBacteria" id="AAK22284">
    <property type="protein sequence ID" value="AAK22284"/>
    <property type="gene ID" value="CC_0297"/>
</dbReference>
<dbReference type="KEGG" id="ccr:CC_0297"/>
<dbReference type="PATRIC" id="fig|190650.5.peg.295"/>
<dbReference type="eggNOG" id="COG0151">
    <property type="taxonomic scope" value="Bacteria"/>
</dbReference>
<dbReference type="HOGENOM" id="CLU_027420_3_1_5"/>
<dbReference type="BioCyc" id="CAULO:CC0297-MONOMER"/>
<dbReference type="UniPathway" id="UPA00074">
    <property type="reaction ID" value="UER00125"/>
</dbReference>
<dbReference type="Proteomes" id="UP000001816">
    <property type="component" value="Chromosome"/>
</dbReference>
<dbReference type="GO" id="GO:0005524">
    <property type="term" value="F:ATP binding"/>
    <property type="evidence" value="ECO:0007669"/>
    <property type="project" value="UniProtKB-KW"/>
</dbReference>
<dbReference type="GO" id="GO:0046872">
    <property type="term" value="F:metal ion binding"/>
    <property type="evidence" value="ECO:0007669"/>
    <property type="project" value="UniProtKB-KW"/>
</dbReference>
<dbReference type="GO" id="GO:0004637">
    <property type="term" value="F:phosphoribosylamine-glycine ligase activity"/>
    <property type="evidence" value="ECO:0007669"/>
    <property type="project" value="UniProtKB-UniRule"/>
</dbReference>
<dbReference type="GO" id="GO:0006189">
    <property type="term" value="P:'de novo' IMP biosynthetic process"/>
    <property type="evidence" value="ECO:0007669"/>
    <property type="project" value="UniProtKB-UniRule"/>
</dbReference>
<dbReference type="GO" id="GO:0009113">
    <property type="term" value="P:purine nucleobase biosynthetic process"/>
    <property type="evidence" value="ECO:0007669"/>
    <property type="project" value="InterPro"/>
</dbReference>
<dbReference type="Gene3D" id="3.40.50.20">
    <property type="match status" value="1"/>
</dbReference>
<dbReference type="Gene3D" id="3.30.1490.20">
    <property type="entry name" value="ATP-grasp fold, A domain"/>
    <property type="match status" value="1"/>
</dbReference>
<dbReference type="Gene3D" id="3.30.470.20">
    <property type="entry name" value="ATP-grasp fold, B domain"/>
    <property type="match status" value="1"/>
</dbReference>
<dbReference type="Gene3D" id="3.90.600.10">
    <property type="entry name" value="Phosphoribosylglycinamide synthetase, C-terminal domain"/>
    <property type="match status" value="1"/>
</dbReference>
<dbReference type="HAMAP" id="MF_00138">
    <property type="entry name" value="GARS"/>
    <property type="match status" value="1"/>
</dbReference>
<dbReference type="InterPro" id="IPR011761">
    <property type="entry name" value="ATP-grasp"/>
</dbReference>
<dbReference type="InterPro" id="IPR013815">
    <property type="entry name" value="ATP_grasp_subdomain_1"/>
</dbReference>
<dbReference type="InterPro" id="IPR016185">
    <property type="entry name" value="PreATP-grasp_dom_sf"/>
</dbReference>
<dbReference type="InterPro" id="IPR020561">
    <property type="entry name" value="PRibGlycinamid_synth_ATP-grasp"/>
</dbReference>
<dbReference type="InterPro" id="IPR000115">
    <property type="entry name" value="PRibGlycinamide_synth"/>
</dbReference>
<dbReference type="InterPro" id="IPR020560">
    <property type="entry name" value="PRibGlycinamide_synth_C-dom"/>
</dbReference>
<dbReference type="InterPro" id="IPR037123">
    <property type="entry name" value="PRibGlycinamide_synth_C_sf"/>
</dbReference>
<dbReference type="InterPro" id="IPR020559">
    <property type="entry name" value="PRibGlycinamide_synth_CS"/>
</dbReference>
<dbReference type="InterPro" id="IPR020562">
    <property type="entry name" value="PRibGlycinamide_synth_N"/>
</dbReference>
<dbReference type="InterPro" id="IPR011054">
    <property type="entry name" value="Rudment_hybrid_motif"/>
</dbReference>
<dbReference type="NCBIfam" id="TIGR00877">
    <property type="entry name" value="purD"/>
    <property type="match status" value="1"/>
</dbReference>
<dbReference type="PANTHER" id="PTHR43472">
    <property type="entry name" value="PHOSPHORIBOSYLAMINE--GLYCINE LIGASE"/>
    <property type="match status" value="1"/>
</dbReference>
<dbReference type="PANTHER" id="PTHR43472:SF1">
    <property type="entry name" value="PHOSPHORIBOSYLAMINE--GLYCINE LIGASE, CHLOROPLASTIC"/>
    <property type="match status" value="1"/>
</dbReference>
<dbReference type="Pfam" id="PF01071">
    <property type="entry name" value="GARS_A"/>
    <property type="match status" value="1"/>
</dbReference>
<dbReference type="Pfam" id="PF02843">
    <property type="entry name" value="GARS_C"/>
    <property type="match status" value="1"/>
</dbReference>
<dbReference type="Pfam" id="PF02844">
    <property type="entry name" value="GARS_N"/>
    <property type="match status" value="1"/>
</dbReference>
<dbReference type="SMART" id="SM01209">
    <property type="entry name" value="GARS_A"/>
    <property type="match status" value="1"/>
</dbReference>
<dbReference type="SMART" id="SM01210">
    <property type="entry name" value="GARS_C"/>
    <property type="match status" value="1"/>
</dbReference>
<dbReference type="SUPFAM" id="SSF56059">
    <property type="entry name" value="Glutathione synthetase ATP-binding domain-like"/>
    <property type="match status" value="1"/>
</dbReference>
<dbReference type="SUPFAM" id="SSF52440">
    <property type="entry name" value="PreATP-grasp domain"/>
    <property type="match status" value="1"/>
</dbReference>
<dbReference type="SUPFAM" id="SSF51246">
    <property type="entry name" value="Rudiment single hybrid motif"/>
    <property type="match status" value="1"/>
</dbReference>
<dbReference type="PROSITE" id="PS50975">
    <property type="entry name" value="ATP_GRASP"/>
    <property type="match status" value="1"/>
</dbReference>
<dbReference type="PROSITE" id="PS00184">
    <property type="entry name" value="GARS"/>
    <property type="match status" value="1"/>
</dbReference>
<comment type="catalytic activity">
    <reaction evidence="2">
        <text>5-phospho-beta-D-ribosylamine + glycine + ATP = N(1)-(5-phospho-beta-D-ribosyl)glycinamide + ADP + phosphate + H(+)</text>
        <dbReference type="Rhea" id="RHEA:17453"/>
        <dbReference type="ChEBI" id="CHEBI:15378"/>
        <dbReference type="ChEBI" id="CHEBI:30616"/>
        <dbReference type="ChEBI" id="CHEBI:43474"/>
        <dbReference type="ChEBI" id="CHEBI:57305"/>
        <dbReference type="ChEBI" id="CHEBI:58681"/>
        <dbReference type="ChEBI" id="CHEBI:143788"/>
        <dbReference type="ChEBI" id="CHEBI:456216"/>
        <dbReference type="EC" id="6.3.4.13"/>
    </reaction>
</comment>
<comment type="cofactor">
    <cofactor evidence="1">
        <name>Mg(2+)</name>
        <dbReference type="ChEBI" id="CHEBI:18420"/>
    </cofactor>
    <cofactor evidence="1">
        <name>Mn(2+)</name>
        <dbReference type="ChEBI" id="CHEBI:29035"/>
    </cofactor>
    <text evidence="1">Binds 1 Mg(2+) or Mn(2+) ion per subunit.</text>
</comment>
<comment type="pathway">
    <text evidence="2">Purine metabolism; IMP biosynthesis via de novo pathway; N(1)-(5-phospho-D-ribosyl)glycinamide from 5-phospho-alpha-D-ribose 1-diphosphate: step 2/2.</text>
</comment>
<comment type="similarity">
    <text evidence="2">Belongs to the GARS family.</text>
</comment>
<organism>
    <name type="scientific">Caulobacter vibrioides (strain ATCC 19089 / CIP 103742 / CB 15)</name>
    <name type="common">Caulobacter crescentus</name>
    <dbReference type="NCBI Taxonomy" id="190650"/>
    <lineage>
        <taxon>Bacteria</taxon>
        <taxon>Pseudomonadati</taxon>
        <taxon>Pseudomonadota</taxon>
        <taxon>Alphaproteobacteria</taxon>
        <taxon>Caulobacterales</taxon>
        <taxon>Caulobacteraceae</taxon>
        <taxon>Caulobacter</taxon>
    </lineage>
</organism>
<reference key="1">
    <citation type="journal article" date="2001" name="Proc. Natl. Acad. Sci. U.S.A.">
        <title>Complete genome sequence of Caulobacter crescentus.</title>
        <authorList>
            <person name="Nierman W.C."/>
            <person name="Feldblyum T.V."/>
            <person name="Laub M.T."/>
            <person name="Paulsen I.T."/>
            <person name="Nelson K.E."/>
            <person name="Eisen J.A."/>
            <person name="Heidelberg J.F."/>
            <person name="Alley M.R.K."/>
            <person name="Ohta N."/>
            <person name="Maddock J.R."/>
            <person name="Potocka I."/>
            <person name="Nelson W.C."/>
            <person name="Newton A."/>
            <person name="Stephens C."/>
            <person name="Phadke N.D."/>
            <person name="Ely B."/>
            <person name="DeBoy R.T."/>
            <person name="Dodson R.J."/>
            <person name="Durkin A.S."/>
            <person name="Gwinn M.L."/>
            <person name="Haft D.H."/>
            <person name="Kolonay J.F."/>
            <person name="Smit J."/>
            <person name="Craven M.B."/>
            <person name="Khouri H.M."/>
            <person name="Shetty J."/>
            <person name="Berry K.J."/>
            <person name="Utterback T.R."/>
            <person name="Tran K."/>
            <person name="Wolf A.M."/>
            <person name="Vamathevan J.J."/>
            <person name="Ermolaeva M.D."/>
            <person name="White O."/>
            <person name="Salzberg S.L."/>
            <person name="Venter J.C."/>
            <person name="Shapiro L."/>
            <person name="Fraser C.M."/>
        </authorList>
    </citation>
    <scope>NUCLEOTIDE SEQUENCE [LARGE SCALE GENOMIC DNA]</scope>
    <source>
        <strain>ATCC 19089 / CIP 103742 / CB 15</strain>
    </source>
</reference>
<protein>
    <recommendedName>
        <fullName evidence="2">Phosphoribosylamine--glycine ligase</fullName>
        <ecNumber evidence="2">6.3.4.13</ecNumber>
    </recommendedName>
    <alternativeName>
        <fullName evidence="2">GARS</fullName>
    </alternativeName>
    <alternativeName>
        <fullName evidence="2">Glycinamide ribonucleotide synthetase</fullName>
    </alternativeName>
    <alternativeName>
        <fullName evidence="2">Phosphoribosylglycinamide synthetase</fullName>
    </alternativeName>
</protein>
<evidence type="ECO:0000250" key="1"/>
<evidence type="ECO:0000255" key="2">
    <source>
        <dbReference type="HAMAP-Rule" id="MF_00138"/>
    </source>
</evidence>
<proteinExistence type="inferred from homology"/>
<gene>
    <name evidence="2" type="primary">purD</name>
    <name type="ordered locus">CC_0297</name>
</gene>
<keyword id="KW-0067">ATP-binding</keyword>
<keyword id="KW-0436">Ligase</keyword>
<keyword id="KW-0460">Magnesium</keyword>
<keyword id="KW-0464">Manganese</keyword>
<keyword id="KW-0479">Metal-binding</keyword>
<keyword id="KW-0547">Nucleotide-binding</keyword>
<keyword id="KW-0658">Purine biosynthesis</keyword>
<keyword id="KW-1185">Reference proteome</keyword>
<sequence>MEKLTILLVGSGGREHALAWKIAQSPLCGRLVAAPGNPGIEAVAELRAVKATDADGLVALAQEIGADLVVVGPESALEVGLADKLAAVGIPCFGGSQRAAQLETSKAFTKDFCQRHGLPTAAYGVFEDAASAGAFLDTLEAPFVIKADGLAAGKGVVIAPDRAAADAAVVDMLGGRFGSAGARVVIEEFMHGEEASLFAVCDGKTAVLFGAAQDHKRAYDGDEGPNTGGMGTYSPPPVLTDALIDQAWRELIVPTVEGMAAEGNPYVGVLYAGLMLTPTGPKLVEYNARFGDPECQTLMLRLDSDIVPILLAAAKGELANAEPPKWREEAAICVVLAAEGYPDAPKTGGRIQGADADFGDDVVVFHAGTTREFEGRLVASGGRVLNVCALGATLSEAREAAYGALETISLEGGFYRTDIGWRALQQR</sequence>
<name>PUR2_CAUVC</name>
<accession>Q9ABD2</accession>
<feature type="chain" id="PRO_0000151441" description="Phosphoribosylamine--glycine ligase">
    <location>
        <begin position="1"/>
        <end position="427"/>
    </location>
</feature>
<feature type="domain" description="ATP-grasp" evidence="2">
    <location>
        <begin position="110"/>
        <end position="315"/>
    </location>
</feature>
<feature type="binding site" evidence="2">
    <location>
        <begin position="136"/>
        <end position="196"/>
    </location>
    <ligand>
        <name>ATP</name>
        <dbReference type="ChEBI" id="CHEBI:30616"/>
    </ligand>
</feature>
<feature type="binding site" evidence="2">
    <location>
        <position position="285"/>
    </location>
    <ligand>
        <name>Mg(2+)</name>
        <dbReference type="ChEBI" id="CHEBI:18420"/>
    </ligand>
</feature>
<feature type="binding site" evidence="2">
    <location>
        <position position="287"/>
    </location>
    <ligand>
        <name>Mg(2+)</name>
        <dbReference type="ChEBI" id="CHEBI:18420"/>
    </ligand>
</feature>